<accession>G3XMD0</accession>
<protein>
    <recommendedName>
        <fullName evidence="5">FAD-linked oxidoreductase azaL</fullName>
        <ecNumber evidence="4">1.-.-.-</ecNumber>
    </recommendedName>
    <alternativeName>
        <fullName evidence="5">Azaphilone biosynthesis cluster protein azaL</fullName>
    </alternativeName>
</protein>
<dbReference type="EC" id="1.-.-.-" evidence="4"/>
<dbReference type="EMBL" id="ACJE01000001">
    <property type="protein sequence ID" value="EHA28243.1"/>
    <property type="status" value="ALT_INIT"/>
    <property type="molecule type" value="Genomic_DNA"/>
</dbReference>
<dbReference type="SMR" id="G3XMD0"/>
<dbReference type="STRING" id="380704.G3XMD0"/>
<dbReference type="GlyCosmos" id="G3XMD0">
    <property type="glycosylation" value="11 sites, No reported glycans"/>
</dbReference>
<dbReference type="HOGENOM" id="CLU_018354_0_0_1"/>
<dbReference type="OrthoDB" id="22847at5052"/>
<dbReference type="Proteomes" id="UP000009038">
    <property type="component" value="Unassembled WGS sequence"/>
</dbReference>
<dbReference type="GO" id="GO:0071949">
    <property type="term" value="F:FAD binding"/>
    <property type="evidence" value="ECO:0007669"/>
    <property type="project" value="InterPro"/>
</dbReference>
<dbReference type="GO" id="GO:0016491">
    <property type="term" value="F:oxidoreductase activity"/>
    <property type="evidence" value="ECO:0007669"/>
    <property type="project" value="UniProtKB-KW"/>
</dbReference>
<dbReference type="Gene3D" id="3.30.465.10">
    <property type="match status" value="1"/>
</dbReference>
<dbReference type="Gene3D" id="3.40.462.20">
    <property type="match status" value="1"/>
</dbReference>
<dbReference type="InterPro" id="IPR016166">
    <property type="entry name" value="FAD-bd_PCMH"/>
</dbReference>
<dbReference type="InterPro" id="IPR036318">
    <property type="entry name" value="FAD-bd_PCMH-like_sf"/>
</dbReference>
<dbReference type="InterPro" id="IPR016169">
    <property type="entry name" value="FAD-bd_PCMH_sub2"/>
</dbReference>
<dbReference type="InterPro" id="IPR050416">
    <property type="entry name" value="FAD-linked_Oxidoreductase"/>
</dbReference>
<dbReference type="InterPro" id="IPR006094">
    <property type="entry name" value="Oxid_FAD_bind_N"/>
</dbReference>
<dbReference type="PANTHER" id="PTHR42973">
    <property type="entry name" value="BINDING OXIDOREDUCTASE, PUTATIVE (AFU_ORTHOLOGUE AFUA_1G17690)-RELATED"/>
    <property type="match status" value="1"/>
</dbReference>
<dbReference type="PANTHER" id="PTHR42973:SF32">
    <property type="entry name" value="FAD-LINKED OXIDOREDUCTASE AFOF"/>
    <property type="match status" value="1"/>
</dbReference>
<dbReference type="Pfam" id="PF01565">
    <property type="entry name" value="FAD_binding_4"/>
    <property type="match status" value="1"/>
</dbReference>
<dbReference type="SUPFAM" id="SSF56176">
    <property type="entry name" value="FAD-binding/transporter-associated domain-like"/>
    <property type="match status" value="1"/>
</dbReference>
<dbReference type="PROSITE" id="PS51387">
    <property type="entry name" value="FAD_PCMH"/>
    <property type="match status" value="1"/>
</dbReference>
<evidence type="ECO:0000255" key="1"/>
<evidence type="ECO:0000255" key="2">
    <source>
        <dbReference type="PROSITE-ProRule" id="PRU00498"/>
    </source>
</evidence>
<evidence type="ECO:0000255" key="3">
    <source>
        <dbReference type="PROSITE-ProRule" id="PRU00718"/>
    </source>
</evidence>
<evidence type="ECO:0000269" key="4">
    <source>
    </source>
</evidence>
<evidence type="ECO:0000303" key="5">
    <source>
    </source>
</evidence>
<evidence type="ECO:0000305" key="6"/>
<proteinExistence type="evidence at transcript level"/>
<keyword id="KW-0274">FAD</keyword>
<keyword id="KW-0285">Flavoprotein</keyword>
<keyword id="KW-0325">Glycoprotein</keyword>
<keyword id="KW-0560">Oxidoreductase</keyword>
<keyword id="KW-0732">Signal</keyword>
<reference key="1">
    <citation type="journal article" date="2011" name="Genome Res.">
        <title>Comparative genomics of citric-acid-producing Aspergillus niger ATCC 1015 versus enzyme-producing CBS 513.88.</title>
        <authorList>
            <person name="Andersen M.R."/>
            <person name="Salazar M.P."/>
            <person name="Schaap P.J."/>
            <person name="van de Vondervoort P.J.I."/>
            <person name="Culley D."/>
            <person name="Thykaer J."/>
            <person name="Frisvad J.C."/>
            <person name="Nielsen K.F."/>
            <person name="Albang R."/>
            <person name="Albermann K."/>
            <person name="Berka R.M."/>
            <person name="Braus G.H."/>
            <person name="Braus-Stromeyer S.A."/>
            <person name="Corrochano L.M."/>
            <person name="Dai Z."/>
            <person name="van Dijck P.W.M."/>
            <person name="Hofmann G."/>
            <person name="Lasure L.L."/>
            <person name="Magnuson J.K."/>
            <person name="Menke H."/>
            <person name="Meijer M."/>
            <person name="Meijer S.L."/>
            <person name="Nielsen J.B."/>
            <person name="Nielsen M.L."/>
            <person name="van Ooyen A.J.J."/>
            <person name="Pel H.J."/>
            <person name="Poulsen L."/>
            <person name="Samson R.A."/>
            <person name="Stam H."/>
            <person name="Tsang A."/>
            <person name="van den Brink J.M."/>
            <person name="Atkins A."/>
            <person name="Aerts A."/>
            <person name="Shapiro H."/>
            <person name="Pangilinan J."/>
            <person name="Salamov A."/>
            <person name="Lou Y."/>
            <person name="Lindquist E."/>
            <person name="Lucas S."/>
            <person name="Grimwood J."/>
            <person name="Grigoriev I.V."/>
            <person name="Kubicek C.P."/>
            <person name="Martinez D."/>
            <person name="van Peij N.N.M.E."/>
            <person name="Roubos J.A."/>
            <person name="Nielsen J."/>
            <person name="Baker S.E."/>
        </authorList>
    </citation>
    <scope>NUCLEOTIDE SEQUENCE [LARGE SCALE GENOMIC DNA]</scope>
    <source>
        <strain>ATCC 1015 / CBS 113.46 / FGSC A1144 / LSHB Ac4 / NCTC 3858a / NRRL 328 / USDA 3528.7</strain>
    </source>
</reference>
<reference key="2">
    <citation type="journal article" date="2012" name="Chem. Biol.">
        <title>Characterization of a silent azaphilone gene cluster from Aspergillus niger ATCC 1015 reveals a hydroxylation-mediated pyran-ring formation.</title>
        <authorList>
            <person name="Zabala A.O."/>
            <person name="Xu W."/>
            <person name="Chooi Y.H."/>
            <person name="Tang Y."/>
        </authorList>
    </citation>
    <scope>FUNCTION</scope>
</reference>
<sequence length="472" mass="50720">MFRTILLCSLGLTTLSSAATHNITSIFSSSLSPGAQIFLPSDTNYTEDVTQRWTTYDAPTYIGAIKPATVKDIQNIVTLAASNKIPFLATAGGHGATITYVNCTNGIEIDISNFNTVSIDASNNTMTVGGAVRFEDIIPPLYEAGKELPTGTAPCVGLVGATIGGGIGNLQGLHGLILDSLLSVELVTPSGDVLTVSTSENADLFWAIRGAGANFGIITSATYKIYNATNNGLAMSANYLFPASENRSVWEIFQSFDETLPPELSLTAYSGFNQTTQEMELIVNAIYYGPKEEGVSYLTNFAALNATETNLMMVAWPNVTSSMAFGADGDACTTGSYLNTWGLGLAETNIDTYTTFFNELQAFSQAHPDYSGIFVVDRYSSAAAAAVPANSTSYGYGYRNINSHLLFENSYPSDNSTLDNAVNSFMRSIRSQFQRTSGFSEMEIYLNYAHGDEGADVWYSPQHLPKLSQLKS</sequence>
<gene>
    <name evidence="5" type="primary">azaL</name>
    <name type="ORF">ASPNIDRAFT_132654</name>
</gene>
<organism>
    <name type="scientific">Aspergillus niger (strain ATCC 1015 / CBS 113.46 / FGSC A1144 / LSHB Ac4 / NCTC 3858a / NRRL 328 / USDA 3528.7)</name>
    <dbReference type="NCBI Taxonomy" id="380704"/>
    <lineage>
        <taxon>Eukaryota</taxon>
        <taxon>Fungi</taxon>
        <taxon>Dikarya</taxon>
        <taxon>Ascomycota</taxon>
        <taxon>Pezizomycotina</taxon>
        <taxon>Eurotiomycetes</taxon>
        <taxon>Eurotiomycetidae</taxon>
        <taxon>Eurotiales</taxon>
        <taxon>Aspergillaceae</taxon>
        <taxon>Aspergillus</taxon>
        <taxon>Aspergillus subgen. Circumdati</taxon>
    </lineage>
</organism>
<name>AZAL_ASPNA</name>
<comment type="function">
    <text evidence="4">FAD-linked oxidoreductase; part of the gene cluster that mediates the biosynthesis of azaphilones, a class of fungal metabolites characterized by a highly oxygenated pyrano-quinone bicyclic core and exhibiting a broad range of bioactivities (PubMed:22921072). In the first step, the non-reducing polyketide synthase azaA forms the hexaketide precursor from successive condensations of five malonyl-CoA units, presumably with a simple acetyl-CoA starter unit (PubMed:22921072). The reactive polyketide chain then undergoes a PT-mediated C2-C7 cyclization to afford the aromatic ring and is eventually released as an aldehyde through the R-domain (PubMed:22921072). The putative ketoreductase azaE is proposed to catalyze the reduction of the terminal ketone resulting in the early culture product FK17-P2a (PubMed:22921072). The monooxygenase azaH was demonstrated to be the only enzyme required to convert FK17-P2a to azanigerone E (PubMed:22921072). AzaH first hydroxylates the benzaldehyde intermediate FK17-P2a at C4, which triggers the formation of the pyran-ring to afford azanigerone E (PubMed:22921072). In parallel, the 2,4-dimethylhexanoyl chain is synthesized by the HR-PKS azaB and is proposed to be transferred to the C4-hydroxyl of azanigerone E by the acyltransferase azaD directly from the ACP domain of azaB (PubMed:22921072). Alternatively, the 2,4-dimethyl-hexanoyl chain may be offloaded from the HR-PKS as a carboxylic acid and converted to an acyl-CoA by azaF (PubMed:22921072). The resulting acyl-CoA molecule could then be taken up as a substrate by AzaD to form azanigerone B (PubMed:22921072). To yield the carboxylic acid substituent in azanigerone A, the hydroxypropyl side chain of azanigerone B would need to undergo a C-C oxidative cleavage catalyzed by cytochrome P450 AzaI (PubMed:22921072). AzaI is proposed to act on a vicinal diol that leads to a C-C bond scission either through an alkoxyradical intermediate or a peroxy complex (PubMed:22921072). In the biosynthesis of azanigerone A, azanigerone B first undergoes hydroxylation at C10, possibly catalyzed by one of the two FAD-dependent monooxygenases encoded in the cluster, azaG or azaL, resulting in the vicinal diol azanigerone C (PubMed:22921072). Oxidative cleavage of azanigerone C by azaI would yield the corresponding aldehyde derivative of azanigerone A (PubMed:22921072). Finally, the dehydrogenase azaJ is proposed to convert the aldehyde functional group into the carboxylic acid, completing the conversion from azanigerone B to azanigerone A (PubMed:22921072). Alternatively, the oxidation of aldehyde to carboxylic acid may be catalyzed by the same P450 enzyme azaI via consecutive oxidation or by endogenous alcohol dehydrogenase (PubMed:22921072).</text>
</comment>
<comment type="pathway">
    <text evidence="4">Secondary metabolite biosynthesis.</text>
</comment>
<comment type="induction">
    <text evidence="4">Expression is under the control of the azaphilone cluster-specific transcription factor azaR (PubMed:22921072).</text>
</comment>
<comment type="similarity">
    <text evidence="6">Belongs to the oxygen-dependent FAD-linked oxidoreductase family.</text>
</comment>
<comment type="sequence caution" evidence="6">
    <conflict type="erroneous initiation">
        <sequence resource="EMBL-CDS" id="EHA28243"/>
    </conflict>
    <text>Truncated N-terminus.</text>
</comment>
<feature type="signal peptide" evidence="1">
    <location>
        <begin position="1"/>
        <end position="18"/>
    </location>
</feature>
<feature type="chain" id="PRO_0000437603" description="FAD-linked oxidoreductase azaL" evidence="1">
    <location>
        <begin position="19"/>
        <end position="472"/>
    </location>
</feature>
<feature type="domain" description="FAD-binding PCMH-type" evidence="3">
    <location>
        <begin position="54"/>
        <end position="228"/>
    </location>
</feature>
<feature type="glycosylation site" description="N-linked (GlcNAc...) asparagine" evidence="2">
    <location>
        <position position="22"/>
    </location>
</feature>
<feature type="glycosylation site" description="N-linked (GlcNAc...) asparagine" evidence="2">
    <location>
        <position position="44"/>
    </location>
</feature>
<feature type="glycosylation site" description="N-linked (GlcNAc...) asparagine" evidence="2">
    <location>
        <position position="102"/>
    </location>
</feature>
<feature type="glycosylation site" description="N-linked (GlcNAc...) asparagine" evidence="2">
    <location>
        <position position="123"/>
    </location>
</feature>
<feature type="glycosylation site" description="N-linked (GlcNAc...) asparagine" evidence="2">
    <location>
        <position position="227"/>
    </location>
</feature>
<feature type="glycosylation site" description="N-linked (GlcNAc...) asparagine" evidence="2">
    <location>
        <position position="246"/>
    </location>
</feature>
<feature type="glycosylation site" description="N-linked (GlcNAc...) asparagine" evidence="2">
    <location>
        <position position="273"/>
    </location>
</feature>
<feature type="glycosylation site" description="N-linked (GlcNAc...) asparagine" evidence="2">
    <location>
        <position position="305"/>
    </location>
</feature>
<feature type="glycosylation site" description="N-linked (GlcNAc...) asparagine" evidence="2">
    <location>
        <position position="318"/>
    </location>
</feature>
<feature type="glycosylation site" description="N-linked (GlcNAc...) asparagine" evidence="2">
    <location>
        <position position="390"/>
    </location>
</feature>
<feature type="glycosylation site" description="N-linked (GlcNAc...) asparagine" evidence="2">
    <location>
        <position position="415"/>
    </location>
</feature>